<comment type="function">
    <text evidence="4 5 6">Involved in the costimulatory signal essential for T-cell proliferation and IFNG production in a PDCD1-independent manner. Interaction with PDCD1 inhibits T-cell proliferation by blocking cell cycle progression and cytokine production.</text>
</comment>
<comment type="subunit">
    <text evidence="5 7">Interacts with PDCD1.</text>
</comment>
<comment type="interaction">
    <interactant intactId="EBI-15716794">
        <id>Q9WUL5</id>
    </interactant>
    <interactant intactId="EBI-5258903">
        <id>Q02242</id>
        <label>Pdcd1</label>
    </interactant>
    <organismsDiffer>false</organismsDiffer>
    <experiments>2</experiments>
</comment>
<comment type="subcellular location">
    <subcellularLocation>
        <location evidence="1">Cell membrane</location>
        <topology evidence="1 9">Single-pass type I membrane protein</topology>
    </subcellularLocation>
</comment>
<comment type="tissue specificity">
    <text evidence="4 5">Expressed in immature and mature bone marrow-derived dendritic cells and splenic dendritic cells. Highly expressed in placenta, liver and weakly expressed in heart, spleen, lymph nodes and thymus. Also expressed in some tumor cell lines of lymphoid origin.</text>
</comment>
<comment type="similarity">
    <text evidence="8">Belongs to the immunoglobulin superfamily. BTN/MOG family.</text>
</comment>
<keyword id="KW-0002">3D-structure</keyword>
<keyword id="KW-1064">Adaptive immunity</keyword>
<keyword id="KW-1003">Cell membrane</keyword>
<keyword id="KW-1015">Disulfide bond</keyword>
<keyword id="KW-0325">Glycoprotein</keyword>
<keyword id="KW-0391">Immunity</keyword>
<keyword id="KW-0393">Immunoglobulin domain</keyword>
<keyword id="KW-0472">Membrane</keyword>
<keyword id="KW-0675">Receptor</keyword>
<keyword id="KW-1185">Reference proteome</keyword>
<keyword id="KW-0677">Repeat</keyword>
<keyword id="KW-0732">Signal</keyword>
<keyword id="KW-0812">Transmembrane</keyword>
<keyword id="KW-1133">Transmembrane helix</keyword>
<feature type="signal peptide" evidence="1">
    <location>
        <begin position="1"/>
        <end position="19"/>
    </location>
</feature>
<feature type="chain" id="PRO_0000014556" description="Programmed cell death 1 ligand 2">
    <location>
        <begin position="20"/>
        <end position="247"/>
    </location>
</feature>
<feature type="topological domain" description="Extracellular" evidence="2">
    <location>
        <begin position="20"/>
        <end position="221"/>
    </location>
</feature>
<feature type="transmembrane region" description="Helical" evidence="2">
    <location>
        <begin position="222"/>
        <end position="242"/>
    </location>
</feature>
<feature type="topological domain" description="Cytoplasmic" evidence="2">
    <location>
        <begin position="243"/>
        <end position="247"/>
    </location>
</feature>
<feature type="domain" description="Ig-like V-type">
    <location>
        <begin position="21"/>
        <end position="118"/>
    </location>
</feature>
<feature type="domain" description="Ig-like C2-type">
    <location>
        <begin position="122"/>
        <end position="203"/>
    </location>
</feature>
<feature type="glycosylation site" description="N-linked (GlcNAc...) asparagine" evidence="2">
    <location>
        <position position="64"/>
    </location>
</feature>
<feature type="glycosylation site" description="N-linked (GlcNAc...) asparagine" evidence="2">
    <location>
        <position position="157"/>
    </location>
</feature>
<feature type="glycosylation site" description="N-linked (GlcNAc...) asparagine" evidence="2">
    <location>
        <position position="163"/>
    </location>
</feature>
<feature type="glycosylation site" description="N-linked (GlcNAc...) asparagine" evidence="2">
    <location>
        <position position="189"/>
    </location>
</feature>
<feature type="disulfide bond" evidence="3">
    <location>
        <begin position="42"/>
        <end position="102"/>
    </location>
</feature>
<feature type="disulfide bond" evidence="3 7">
    <location>
        <begin position="143"/>
        <end position="192"/>
    </location>
</feature>
<feature type="mutagenesis site" description="No effect on PDCD1 binding." evidence="6">
    <original>D</original>
    <variation>S</variation>
    <location>
        <position position="33"/>
    </location>
</feature>
<feature type="mutagenesis site" description="No effect on PDCD1 binding." evidence="6">
    <original>S</original>
    <variation>Y</variation>
    <location>
        <position position="39"/>
    </location>
</feature>
<feature type="mutagenesis site" description="No effect on PDCD1 binding." evidence="6">
    <original>E</original>
    <variation>S</variation>
    <location>
        <position position="41"/>
    </location>
</feature>
<feature type="mutagenesis site" description="Significantly reduces the binding to PDCD1." evidence="6">
    <original>R</original>
    <variation>S</variation>
    <location>
        <position position="56"/>
    </location>
</feature>
<feature type="mutagenesis site" description="No effect on PDCD1 binding." evidence="6">
    <original>S</original>
    <variation>Y</variation>
    <location>
        <position position="58"/>
    </location>
</feature>
<feature type="mutagenesis site" description="No effect on PDCD1 binding." evidence="6">
    <original>D</original>
    <variation>S</variation>
    <location>
        <position position="65"/>
    </location>
</feature>
<feature type="mutagenesis site" description="Significantly reduces the binding to PDCD1." evidence="6">
    <original>S</original>
    <variation>Y</variation>
    <location>
        <position position="67"/>
    </location>
</feature>
<feature type="mutagenesis site" description="Significantly reduces the binding to PDCD1." evidence="6">
    <original>E</original>
    <variation>S</variation>
    <location>
        <position position="71"/>
    </location>
</feature>
<feature type="mutagenesis site" description="No effect on PDCD1 binding." evidence="6">
    <original>R</original>
    <variation>S</variation>
    <location>
        <position position="72"/>
    </location>
</feature>
<feature type="mutagenesis site" description="No effect on PDCD1 binding." evidence="6">
    <original>K</original>
    <variation>S</variation>
    <location>
        <position position="84"/>
    </location>
</feature>
<feature type="mutagenesis site" description="No effect on PDCD1 binding." evidence="6">
    <original>H</original>
    <variation>A</variation>
    <location>
        <position position="88"/>
    </location>
</feature>
<feature type="mutagenesis site" description="Significantly reduces the binding to PDCD1." evidence="6">
    <original>R</original>
    <variation>S</variation>
    <location>
        <position position="101"/>
    </location>
</feature>
<feature type="mutagenesis site" description="No effect on PDCD1 binding." evidence="6">
    <original>L</original>
    <variation>A</variation>
    <location>
        <position position="103"/>
    </location>
</feature>
<feature type="mutagenesis site" description="Abolishes the binding to PDCD1." evidence="6">
    <original>I</original>
    <variation>A</variation>
    <location>
        <position position="105"/>
    </location>
</feature>
<feature type="mutagenesis site" description="Abolishes the binding to PDCD1. Costimulates proliferation and IFNG production of T-cells." evidence="6">
    <original>D</original>
    <variation>S</variation>
    <location>
        <position position="111"/>
    </location>
</feature>
<feature type="mutagenesis site" description="Abolishes the binding to PDCD1. Costimulates proliferation and IFNG production of T-cells." evidence="6">
    <original>K</original>
    <variation>S</variation>
    <location>
        <position position="113"/>
    </location>
</feature>
<feature type="mutagenesis site" description="No effect on PDCD1 binding." evidence="6">
    <original>T</original>
    <variation>Y</variation>
    <location>
        <position position="116"/>
    </location>
</feature>
<feature type="strand" evidence="10">
    <location>
        <begin position="28"/>
        <end position="33"/>
    </location>
</feature>
<feature type="strand" evidence="10">
    <location>
        <begin position="38"/>
        <end position="44"/>
    </location>
</feature>
<feature type="turn" evidence="12">
    <location>
        <begin position="46"/>
        <end position="48"/>
    </location>
</feature>
<feature type="helix" evidence="12">
    <location>
        <begin position="52"/>
        <end position="54"/>
    </location>
</feature>
<feature type="strand" evidence="10">
    <location>
        <begin position="55"/>
        <end position="61"/>
    </location>
</feature>
<feature type="strand" evidence="11">
    <location>
        <begin position="63"/>
        <end position="69"/>
    </location>
</feature>
<feature type="strand" evidence="12">
    <location>
        <begin position="73"/>
        <end position="75"/>
    </location>
</feature>
<feature type="helix" evidence="10">
    <location>
        <begin position="77"/>
        <end position="82"/>
    </location>
</feature>
<feature type="strand" evidence="10">
    <location>
        <begin position="84"/>
        <end position="89"/>
    </location>
</feature>
<feature type="helix" evidence="10">
    <location>
        <begin position="94"/>
        <end position="96"/>
    </location>
</feature>
<feature type="strand" evidence="10">
    <location>
        <begin position="98"/>
        <end position="106"/>
    </location>
</feature>
<feature type="strand" evidence="10">
    <location>
        <begin position="109"/>
        <end position="121"/>
    </location>
</feature>
<feature type="strand" evidence="10">
    <location>
        <begin position="126"/>
        <end position="132"/>
    </location>
</feature>
<feature type="turn" evidence="10">
    <location>
        <begin position="134"/>
        <end position="136"/>
    </location>
</feature>
<feature type="strand" evidence="10">
    <location>
        <begin position="139"/>
        <end position="149"/>
    </location>
</feature>
<feature type="strand" evidence="10">
    <location>
        <begin position="152"/>
        <end position="155"/>
    </location>
</feature>
<feature type="strand" evidence="10">
    <location>
        <begin position="163"/>
        <end position="168"/>
    </location>
</feature>
<feature type="strand" evidence="10">
    <location>
        <begin position="174"/>
        <end position="182"/>
    </location>
</feature>
<feature type="strand" evidence="10">
    <location>
        <begin position="190"/>
        <end position="196"/>
    </location>
</feature>
<feature type="turn" evidence="10">
    <location>
        <begin position="197"/>
        <end position="200"/>
    </location>
</feature>
<feature type="strand" evidence="10">
    <location>
        <begin position="201"/>
        <end position="207"/>
    </location>
</feature>
<accession>Q9WUL5</accession>
<gene>
    <name type="primary">Pdcd1lg2</name>
    <name type="synonym">B7dc</name>
    <name type="synonym">Btdc</name>
    <name type="synonym">Cd273</name>
    <name type="synonym">Pdl2</name>
</gene>
<name>PD1L2_MOUSE</name>
<evidence type="ECO:0000250" key="1">
    <source>
        <dbReference type="UniProtKB" id="Q9BQ51"/>
    </source>
</evidence>
<evidence type="ECO:0000255" key="2"/>
<evidence type="ECO:0000255" key="3">
    <source>
        <dbReference type="PROSITE-ProRule" id="PRU00114"/>
    </source>
</evidence>
<evidence type="ECO:0000269" key="4">
    <source>
    </source>
</evidence>
<evidence type="ECO:0000269" key="5">
    <source>
    </source>
</evidence>
<evidence type="ECO:0000269" key="6">
    <source>
    </source>
</evidence>
<evidence type="ECO:0000269" key="7">
    <source>
    </source>
</evidence>
<evidence type="ECO:0000305" key="8"/>
<evidence type="ECO:0000305" key="9">
    <source>
    </source>
</evidence>
<evidence type="ECO:0007829" key="10">
    <source>
        <dbReference type="PDB" id="3BP6"/>
    </source>
</evidence>
<evidence type="ECO:0007829" key="11">
    <source>
        <dbReference type="PDB" id="3RNK"/>
    </source>
</evidence>
<evidence type="ECO:0007829" key="12">
    <source>
        <dbReference type="PDB" id="3RNQ"/>
    </source>
</evidence>
<organism>
    <name type="scientific">Mus musculus</name>
    <name type="common">Mouse</name>
    <dbReference type="NCBI Taxonomy" id="10090"/>
    <lineage>
        <taxon>Eukaryota</taxon>
        <taxon>Metazoa</taxon>
        <taxon>Chordata</taxon>
        <taxon>Craniata</taxon>
        <taxon>Vertebrata</taxon>
        <taxon>Euteleostomi</taxon>
        <taxon>Mammalia</taxon>
        <taxon>Eutheria</taxon>
        <taxon>Euarchontoglires</taxon>
        <taxon>Glires</taxon>
        <taxon>Rodentia</taxon>
        <taxon>Myomorpha</taxon>
        <taxon>Muroidea</taxon>
        <taxon>Muridae</taxon>
        <taxon>Murinae</taxon>
        <taxon>Mus</taxon>
        <taxon>Mus</taxon>
    </lineage>
</organism>
<dbReference type="EMBL" id="AF142780">
    <property type="protein sequence ID" value="AAD33892.1"/>
    <property type="molecule type" value="mRNA"/>
</dbReference>
<dbReference type="EMBL" id="AK089369">
    <property type="protein sequence ID" value="BAC40858.1"/>
    <property type="molecule type" value="mRNA"/>
</dbReference>
<dbReference type="CCDS" id="CCDS29736.1"/>
<dbReference type="RefSeq" id="NP_067371.1">
    <property type="nucleotide sequence ID" value="NM_021396.2"/>
</dbReference>
<dbReference type="PDB" id="3BOV">
    <property type="method" value="X-ray"/>
    <property type="resolution" value="1.77 A"/>
    <property type="chains" value="A=20-123"/>
</dbReference>
<dbReference type="PDB" id="3BP5">
    <property type="method" value="X-ray"/>
    <property type="resolution" value="1.80 A"/>
    <property type="chains" value="B=20-220"/>
</dbReference>
<dbReference type="PDB" id="3BP6">
    <property type="method" value="X-ray"/>
    <property type="resolution" value="1.60 A"/>
    <property type="chains" value="B=20-220"/>
</dbReference>
<dbReference type="PDB" id="3RNK">
    <property type="method" value="X-ray"/>
    <property type="resolution" value="1.74 A"/>
    <property type="chains" value="B=20-123"/>
</dbReference>
<dbReference type="PDB" id="3RNQ">
    <property type="method" value="X-ray"/>
    <property type="resolution" value="1.60 A"/>
    <property type="chains" value="B=20-220"/>
</dbReference>
<dbReference type="PDBsum" id="3BOV"/>
<dbReference type="PDBsum" id="3BP5"/>
<dbReference type="PDBsum" id="3BP6"/>
<dbReference type="PDBsum" id="3RNK"/>
<dbReference type="PDBsum" id="3RNQ"/>
<dbReference type="SMR" id="Q9WUL5"/>
<dbReference type="BioGRID" id="208388">
    <property type="interactions" value="1"/>
</dbReference>
<dbReference type="DIP" id="DIP-46166N"/>
<dbReference type="FunCoup" id="Q9WUL5">
    <property type="interactions" value="354"/>
</dbReference>
<dbReference type="IntAct" id="Q9WUL5">
    <property type="interactions" value="1"/>
</dbReference>
<dbReference type="STRING" id="10090.ENSMUSP00000158422"/>
<dbReference type="BindingDB" id="Q9WUL5"/>
<dbReference type="ChEMBL" id="CHEMBL4523499"/>
<dbReference type="GlyCosmos" id="Q9WUL5">
    <property type="glycosylation" value="4 sites, No reported glycans"/>
</dbReference>
<dbReference type="GlyGen" id="Q9WUL5">
    <property type="glycosylation" value="4 sites"/>
</dbReference>
<dbReference type="PhosphoSitePlus" id="Q9WUL5"/>
<dbReference type="PaxDb" id="10090-ENSMUSP00000108195"/>
<dbReference type="ProteomicsDB" id="294037"/>
<dbReference type="ABCD" id="Q9WUL5">
    <property type="antibodies" value="27 sequenced antibodies"/>
</dbReference>
<dbReference type="Antibodypedia" id="2736">
    <property type="antibodies" value="1172 antibodies from 42 providers"/>
</dbReference>
<dbReference type="DNASU" id="58205"/>
<dbReference type="Ensembl" id="ENSMUST00000112576.4">
    <property type="protein sequence ID" value="ENSMUSP00000108195.3"/>
    <property type="gene ID" value="ENSMUSG00000016498.11"/>
</dbReference>
<dbReference type="Ensembl" id="ENSMUST00000235164.2">
    <property type="protein sequence ID" value="ENSMUSP00000158422.2"/>
    <property type="gene ID" value="ENSMUSG00000016498.11"/>
</dbReference>
<dbReference type="GeneID" id="58205"/>
<dbReference type="KEGG" id="mmu:58205"/>
<dbReference type="UCSC" id="uc008hdk.2">
    <property type="organism name" value="mouse"/>
</dbReference>
<dbReference type="AGR" id="MGI:1930125"/>
<dbReference type="CTD" id="80380"/>
<dbReference type="MGI" id="MGI:1930125">
    <property type="gene designation" value="Pdcd1lg2"/>
</dbReference>
<dbReference type="VEuPathDB" id="HostDB:ENSMUSG00000016498"/>
<dbReference type="eggNOG" id="ENOG502S1Y9">
    <property type="taxonomic scope" value="Eukaryota"/>
</dbReference>
<dbReference type="GeneTree" id="ENSGT00940000161373"/>
<dbReference type="HOGENOM" id="CLU_013137_8_3_1"/>
<dbReference type="InParanoid" id="Q9WUL5"/>
<dbReference type="OMA" id="ELYIVEH"/>
<dbReference type="OrthoDB" id="8680608at2759"/>
<dbReference type="PhylomeDB" id="Q9WUL5"/>
<dbReference type="TreeFam" id="TF331083"/>
<dbReference type="Reactome" id="R-MMU-389948">
    <property type="pathway name" value="Co-inhibition by PD-1"/>
</dbReference>
<dbReference type="BioGRID-ORCS" id="58205">
    <property type="hits" value="1 hit in 81 CRISPR screens"/>
</dbReference>
<dbReference type="ChiTaRS" id="Pdcd1lg2">
    <property type="organism name" value="mouse"/>
</dbReference>
<dbReference type="EvolutionaryTrace" id="Q9WUL5"/>
<dbReference type="PRO" id="PR:Q9WUL5"/>
<dbReference type="Proteomes" id="UP000000589">
    <property type="component" value="Chromosome 19"/>
</dbReference>
<dbReference type="RNAct" id="Q9WUL5">
    <property type="molecule type" value="protein"/>
</dbReference>
<dbReference type="Bgee" id="ENSMUSG00000016498">
    <property type="expression patterns" value="Expressed in gastrula and 25 other cell types or tissues"/>
</dbReference>
<dbReference type="ExpressionAtlas" id="Q9WUL5">
    <property type="expression patterns" value="baseline and differential"/>
</dbReference>
<dbReference type="GO" id="GO:0005886">
    <property type="term" value="C:plasma membrane"/>
    <property type="evidence" value="ECO:0007669"/>
    <property type="project" value="UniProtKB-SubCell"/>
</dbReference>
<dbReference type="GO" id="GO:0002250">
    <property type="term" value="P:adaptive immune response"/>
    <property type="evidence" value="ECO:0007669"/>
    <property type="project" value="UniProtKB-KW"/>
</dbReference>
<dbReference type="GO" id="GO:0046007">
    <property type="term" value="P:negative regulation of activated T cell proliferation"/>
    <property type="evidence" value="ECO:0007669"/>
    <property type="project" value="Ensembl"/>
</dbReference>
<dbReference type="GO" id="GO:0032693">
    <property type="term" value="P:negative regulation of interleukin-10 production"/>
    <property type="evidence" value="ECO:0007669"/>
    <property type="project" value="Ensembl"/>
</dbReference>
<dbReference type="GO" id="GO:0042130">
    <property type="term" value="P:negative regulation of T cell proliferation"/>
    <property type="evidence" value="ECO:0000314"/>
    <property type="project" value="MGI"/>
</dbReference>
<dbReference type="GO" id="GO:0032689">
    <property type="term" value="P:negative regulation of type II interferon production"/>
    <property type="evidence" value="ECO:0007669"/>
    <property type="project" value="Ensembl"/>
</dbReference>
<dbReference type="GO" id="GO:0042102">
    <property type="term" value="P:positive regulation of T cell proliferation"/>
    <property type="evidence" value="ECO:0000314"/>
    <property type="project" value="MGI"/>
</dbReference>
<dbReference type="CDD" id="cd20986">
    <property type="entry name" value="IgC1_PD-L2"/>
    <property type="match status" value="1"/>
</dbReference>
<dbReference type="CDD" id="cd20983">
    <property type="entry name" value="IgV_PD-L2"/>
    <property type="match status" value="1"/>
</dbReference>
<dbReference type="FunFam" id="2.60.40.10:FF:001078">
    <property type="entry name" value="Programmed cell death 1 ligand 2"/>
    <property type="match status" value="1"/>
</dbReference>
<dbReference type="FunFam" id="2.60.40.10:FF:001239">
    <property type="entry name" value="Programmed cell death 1 ligand 2"/>
    <property type="match status" value="1"/>
</dbReference>
<dbReference type="Gene3D" id="2.60.40.10">
    <property type="entry name" value="Immunoglobulins"/>
    <property type="match status" value="2"/>
</dbReference>
<dbReference type="InterPro" id="IPR053896">
    <property type="entry name" value="BTN3A2-like_Ig-C"/>
</dbReference>
<dbReference type="InterPro" id="IPR007110">
    <property type="entry name" value="Ig-like_dom"/>
</dbReference>
<dbReference type="InterPro" id="IPR036179">
    <property type="entry name" value="Ig-like_dom_sf"/>
</dbReference>
<dbReference type="InterPro" id="IPR013783">
    <property type="entry name" value="Ig-like_fold"/>
</dbReference>
<dbReference type="InterPro" id="IPR003599">
    <property type="entry name" value="Ig_sub"/>
</dbReference>
<dbReference type="InterPro" id="IPR051713">
    <property type="entry name" value="T-cell_Activation_Regulation"/>
</dbReference>
<dbReference type="PANTHER" id="PTHR25466:SF1">
    <property type="entry name" value="PROGRAMMED CELL DEATH 1 LIGAND 2"/>
    <property type="match status" value="1"/>
</dbReference>
<dbReference type="PANTHER" id="PTHR25466">
    <property type="entry name" value="T-LYMPHOCYTE ACTIVATION ANTIGEN"/>
    <property type="match status" value="1"/>
</dbReference>
<dbReference type="Pfam" id="PF22705">
    <property type="entry name" value="C2-set_3"/>
    <property type="match status" value="1"/>
</dbReference>
<dbReference type="SMART" id="SM00409">
    <property type="entry name" value="IG"/>
    <property type="match status" value="1"/>
</dbReference>
<dbReference type="SUPFAM" id="SSF48726">
    <property type="entry name" value="Immunoglobulin"/>
    <property type="match status" value="2"/>
</dbReference>
<dbReference type="PROSITE" id="PS50835">
    <property type="entry name" value="IG_LIKE"/>
    <property type="match status" value="2"/>
</dbReference>
<protein>
    <recommendedName>
        <fullName>Programmed cell death 1 ligand 2</fullName>
        <shortName>PD-1 ligand 2</shortName>
        <shortName>PD-L2</shortName>
        <shortName>PDCD1 ligand 2</shortName>
        <shortName>Programmed death ligand 2</shortName>
    </recommendedName>
    <alternativeName>
        <fullName>Butyrophilin B7-DC</fullName>
        <shortName>B7-DC</shortName>
    </alternativeName>
    <cdAntigenName>CD273</cdAntigenName>
</protein>
<reference key="1">
    <citation type="journal article" date="2001" name="J. Exp. Med.">
        <title>B7-DC, a new dendritic cell molecule with potent costimulatory properties for T cells.</title>
        <authorList>
            <person name="Tseng S.-Y."/>
            <person name="Otsuji M."/>
            <person name="Gorski K."/>
            <person name="Huang X."/>
            <person name="Slansky J.E."/>
            <person name="Pai S.I."/>
            <person name="Shalabi A."/>
            <person name="Shin T."/>
            <person name="Pardoll D.M."/>
            <person name="Tsuchiya H."/>
        </authorList>
    </citation>
    <scope>NUCLEOTIDE SEQUENCE [MRNA]</scope>
    <scope>FUNCTION</scope>
    <scope>INTERACTION WITH PDCD1</scope>
    <scope>TISSUE SPECIFICITY</scope>
    <source>
        <strain>BALB/cJ</strain>
    </source>
</reference>
<reference key="2">
    <citation type="journal article" date="2005" name="Science">
        <title>The transcriptional landscape of the mammalian genome.</title>
        <authorList>
            <person name="Carninci P."/>
            <person name="Kasukawa T."/>
            <person name="Katayama S."/>
            <person name="Gough J."/>
            <person name="Frith M.C."/>
            <person name="Maeda N."/>
            <person name="Oyama R."/>
            <person name="Ravasi T."/>
            <person name="Lenhard B."/>
            <person name="Wells C."/>
            <person name="Kodzius R."/>
            <person name="Shimokawa K."/>
            <person name="Bajic V.B."/>
            <person name="Brenner S.E."/>
            <person name="Batalov S."/>
            <person name="Forrest A.R."/>
            <person name="Zavolan M."/>
            <person name="Davis M.J."/>
            <person name="Wilming L.G."/>
            <person name="Aidinis V."/>
            <person name="Allen J.E."/>
            <person name="Ambesi-Impiombato A."/>
            <person name="Apweiler R."/>
            <person name="Aturaliya R.N."/>
            <person name="Bailey T.L."/>
            <person name="Bansal M."/>
            <person name="Baxter L."/>
            <person name="Beisel K.W."/>
            <person name="Bersano T."/>
            <person name="Bono H."/>
            <person name="Chalk A.M."/>
            <person name="Chiu K.P."/>
            <person name="Choudhary V."/>
            <person name="Christoffels A."/>
            <person name="Clutterbuck D.R."/>
            <person name="Crowe M.L."/>
            <person name="Dalla E."/>
            <person name="Dalrymple B.P."/>
            <person name="de Bono B."/>
            <person name="Della Gatta G."/>
            <person name="di Bernardo D."/>
            <person name="Down T."/>
            <person name="Engstrom P."/>
            <person name="Fagiolini M."/>
            <person name="Faulkner G."/>
            <person name="Fletcher C.F."/>
            <person name="Fukushima T."/>
            <person name="Furuno M."/>
            <person name="Futaki S."/>
            <person name="Gariboldi M."/>
            <person name="Georgii-Hemming P."/>
            <person name="Gingeras T.R."/>
            <person name="Gojobori T."/>
            <person name="Green R.E."/>
            <person name="Gustincich S."/>
            <person name="Harbers M."/>
            <person name="Hayashi Y."/>
            <person name="Hensch T.K."/>
            <person name="Hirokawa N."/>
            <person name="Hill D."/>
            <person name="Huminiecki L."/>
            <person name="Iacono M."/>
            <person name="Ikeo K."/>
            <person name="Iwama A."/>
            <person name="Ishikawa T."/>
            <person name="Jakt M."/>
            <person name="Kanapin A."/>
            <person name="Katoh M."/>
            <person name="Kawasawa Y."/>
            <person name="Kelso J."/>
            <person name="Kitamura H."/>
            <person name="Kitano H."/>
            <person name="Kollias G."/>
            <person name="Krishnan S.P."/>
            <person name="Kruger A."/>
            <person name="Kummerfeld S.K."/>
            <person name="Kurochkin I.V."/>
            <person name="Lareau L.F."/>
            <person name="Lazarevic D."/>
            <person name="Lipovich L."/>
            <person name="Liu J."/>
            <person name="Liuni S."/>
            <person name="McWilliam S."/>
            <person name="Madan Babu M."/>
            <person name="Madera M."/>
            <person name="Marchionni L."/>
            <person name="Matsuda H."/>
            <person name="Matsuzawa S."/>
            <person name="Miki H."/>
            <person name="Mignone F."/>
            <person name="Miyake S."/>
            <person name="Morris K."/>
            <person name="Mottagui-Tabar S."/>
            <person name="Mulder N."/>
            <person name="Nakano N."/>
            <person name="Nakauchi H."/>
            <person name="Ng P."/>
            <person name="Nilsson R."/>
            <person name="Nishiguchi S."/>
            <person name="Nishikawa S."/>
            <person name="Nori F."/>
            <person name="Ohara O."/>
            <person name="Okazaki Y."/>
            <person name="Orlando V."/>
            <person name="Pang K.C."/>
            <person name="Pavan W.J."/>
            <person name="Pavesi G."/>
            <person name="Pesole G."/>
            <person name="Petrovsky N."/>
            <person name="Piazza S."/>
            <person name="Reed J."/>
            <person name="Reid J.F."/>
            <person name="Ring B.Z."/>
            <person name="Ringwald M."/>
            <person name="Rost B."/>
            <person name="Ruan Y."/>
            <person name="Salzberg S.L."/>
            <person name="Sandelin A."/>
            <person name="Schneider C."/>
            <person name="Schoenbach C."/>
            <person name="Sekiguchi K."/>
            <person name="Semple C.A."/>
            <person name="Seno S."/>
            <person name="Sessa L."/>
            <person name="Sheng Y."/>
            <person name="Shibata Y."/>
            <person name="Shimada H."/>
            <person name="Shimada K."/>
            <person name="Silva D."/>
            <person name="Sinclair B."/>
            <person name="Sperling S."/>
            <person name="Stupka E."/>
            <person name="Sugiura K."/>
            <person name="Sultana R."/>
            <person name="Takenaka Y."/>
            <person name="Taki K."/>
            <person name="Tammoja K."/>
            <person name="Tan S.L."/>
            <person name="Tang S."/>
            <person name="Taylor M.S."/>
            <person name="Tegner J."/>
            <person name="Teichmann S.A."/>
            <person name="Ueda H.R."/>
            <person name="van Nimwegen E."/>
            <person name="Verardo R."/>
            <person name="Wei C.L."/>
            <person name="Yagi K."/>
            <person name="Yamanishi H."/>
            <person name="Zabarovsky E."/>
            <person name="Zhu S."/>
            <person name="Zimmer A."/>
            <person name="Hide W."/>
            <person name="Bult C."/>
            <person name="Grimmond S.M."/>
            <person name="Teasdale R.D."/>
            <person name="Liu E.T."/>
            <person name="Brusic V."/>
            <person name="Quackenbush J."/>
            <person name="Wahlestedt C."/>
            <person name="Mattick J.S."/>
            <person name="Hume D.A."/>
            <person name="Kai C."/>
            <person name="Sasaki D."/>
            <person name="Tomaru Y."/>
            <person name="Fukuda S."/>
            <person name="Kanamori-Katayama M."/>
            <person name="Suzuki M."/>
            <person name="Aoki J."/>
            <person name="Arakawa T."/>
            <person name="Iida J."/>
            <person name="Imamura K."/>
            <person name="Itoh M."/>
            <person name="Kato T."/>
            <person name="Kawaji H."/>
            <person name="Kawagashira N."/>
            <person name="Kawashima T."/>
            <person name="Kojima M."/>
            <person name="Kondo S."/>
            <person name="Konno H."/>
            <person name="Nakano K."/>
            <person name="Ninomiya N."/>
            <person name="Nishio T."/>
            <person name="Okada M."/>
            <person name="Plessy C."/>
            <person name="Shibata K."/>
            <person name="Shiraki T."/>
            <person name="Suzuki S."/>
            <person name="Tagami M."/>
            <person name="Waki K."/>
            <person name="Watahiki A."/>
            <person name="Okamura-Oho Y."/>
            <person name="Suzuki H."/>
            <person name="Kawai J."/>
            <person name="Hayashizaki Y."/>
        </authorList>
    </citation>
    <scope>NUCLEOTIDE SEQUENCE [LARGE SCALE MRNA]</scope>
    <source>
        <strain>C57BL/6J</strain>
    </source>
</reference>
<reference key="3">
    <citation type="journal article" date="2001" name="Nat. Immunol.">
        <title>PD-L2 is a second ligand for PD-1 and inhibits T cell activation.</title>
        <authorList>
            <person name="Latchman Y."/>
            <person name="Wood C.R."/>
            <person name="Chernova T."/>
            <person name="Chaudhary D."/>
            <person name="Borde M."/>
            <person name="Chernova I."/>
            <person name="Iwai Y."/>
            <person name="Long A.J."/>
            <person name="Brown J.A."/>
            <person name="Nunes R."/>
            <person name="Greenfield E.A."/>
            <person name="Bourque K."/>
            <person name="Boussiotis V.A."/>
            <person name="Carter L.L."/>
            <person name="Carreno B.M."/>
            <person name="Malenkovich N."/>
            <person name="Nishimura H."/>
            <person name="Okazaki T."/>
            <person name="Honjo T."/>
            <person name="Sharpe A.H."/>
            <person name="Freeman G.J."/>
        </authorList>
    </citation>
    <scope>FUNCTION</scope>
    <scope>TISSUE SPECIFICITY</scope>
</reference>
<reference key="4">
    <citation type="journal article" date="2003" name="J. Exp. Med.">
        <title>Molecular modeling and functional mapping of B7-H1 and B7-DC uncouple costimulatory function from PD-1 interaction.</title>
        <authorList>
            <person name="Wang S."/>
            <person name="Bajorath J."/>
            <person name="Flies D.B."/>
            <person name="Dong H."/>
            <person name="Honjo T."/>
            <person name="Chen L."/>
        </authorList>
    </citation>
    <scope>FUNCTION</scope>
    <scope>MUTAGENESIS OF ASP-33; SER-39; GLU-41; ARG-56; SER-58; ASP-65; SER-67; GLU-71; ARG-72; LYS-84; HIS-88; ARG-101; LEU-103; ILE-105; ASP-111; LYS-113 AND THR-116</scope>
</reference>
<reference key="5">
    <citation type="journal article" date="2008" name="Proc. Natl. Acad. Sci. U.S.A.">
        <title>Crystal structure of the complex between programmed death-1 (PD-1) and its ligand PD-L2.</title>
        <authorList>
            <person name="Lazar-Molnar E."/>
            <person name="Yan Q."/>
            <person name="Cao E."/>
            <person name="Ramagopal U."/>
            <person name="Nathenson S.G."/>
            <person name="Almo S.C."/>
        </authorList>
    </citation>
    <scope>X-RAY CRYSTALLOGRAPHY (1.6 ANGSTROMS) OF 1-220 IN COMPLEX WITH PDCD1</scope>
    <scope>DISULFIDE BOND</scope>
</reference>
<sequence>MLLLLPILNLSLQLHPVAALFTVTAPKEVYTVDVGSSVSLECDFDRRECTELEGIRASLQKVENDTSLQSERATLLEEQLPLGKALFHIPSVQVRDSGQYRCLVICGAAWDYKYLTVKVKASYMRIDTRILEVPGTGEVQLTCQARGYPLAEVSWQNVSVPANTSHIRTPEGLYQVTSVLRLKPQPSRNFSCMFWNAHMKELTSAIIDPLSRMEPKVPRTWPLHVFIPACTIALIFLAIVIIQRKRI</sequence>
<proteinExistence type="evidence at protein level"/>